<dbReference type="EMBL" id="X65224">
    <property type="protein sequence ID" value="CAA46330.1"/>
    <property type="molecule type" value="mRNA"/>
</dbReference>
<dbReference type="EMBL" id="Y14341">
    <property type="protein sequence ID" value="CAA74726.1"/>
    <property type="molecule type" value="Genomic_DNA"/>
</dbReference>
<dbReference type="EMBL" id="Y14342">
    <property type="protein sequence ID" value="CAA74726.1"/>
    <property type="status" value="JOINED"/>
    <property type="molecule type" value="Genomic_DNA"/>
</dbReference>
<dbReference type="EMBL" id="Y14343">
    <property type="protein sequence ID" value="CAA74726.1"/>
    <property type="status" value="JOINED"/>
    <property type="molecule type" value="Genomic_DNA"/>
</dbReference>
<dbReference type="EMBL" id="Y14344">
    <property type="protein sequence ID" value="CAA74726.1"/>
    <property type="status" value="JOINED"/>
    <property type="molecule type" value="Genomic_DNA"/>
</dbReference>
<dbReference type="EMBL" id="Y14345">
    <property type="protein sequence ID" value="CAA74726.1"/>
    <property type="status" value="JOINED"/>
    <property type="molecule type" value="Genomic_DNA"/>
</dbReference>
<dbReference type="EMBL" id="Y14346">
    <property type="protein sequence ID" value="CAA74726.1"/>
    <property type="status" value="JOINED"/>
    <property type="molecule type" value="Genomic_DNA"/>
</dbReference>
<dbReference type="EMBL" id="Y14347">
    <property type="protein sequence ID" value="CAA74726.1"/>
    <property type="status" value="JOINED"/>
    <property type="molecule type" value="Genomic_DNA"/>
</dbReference>
<dbReference type="EMBL" id="Y14348">
    <property type="protein sequence ID" value="CAA74726.1"/>
    <property type="status" value="JOINED"/>
    <property type="molecule type" value="Genomic_DNA"/>
</dbReference>
<dbReference type="EMBL" id="Y14349">
    <property type="protein sequence ID" value="CAA74726.1"/>
    <property type="status" value="JOINED"/>
    <property type="molecule type" value="Genomic_DNA"/>
</dbReference>
<dbReference type="EMBL" id="Y14350">
    <property type="protein sequence ID" value="CAA74726.1"/>
    <property type="status" value="JOINED"/>
    <property type="molecule type" value="Genomic_DNA"/>
</dbReference>
<dbReference type="EMBL" id="Y14351">
    <property type="protein sequence ID" value="CAA74726.1"/>
    <property type="status" value="JOINED"/>
    <property type="molecule type" value="Genomic_DNA"/>
</dbReference>
<dbReference type="EMBL" id="Y14352">
    <property type="protein sequence ID" value="CAA74726.1"/>
    <property type="status" value="JOINED"/>
    <property type="molecule type" value="Genomic_DNA"/>
</dbReference>
<dbReference type="EMBL" id="Y14353">
    <property type="protein sequence ID" value="CAA74726.1"/>
    <property type="status" value="JOINED"/>
    <property type="molecule type" value="Genomic_DNA"/>
</dbReference>
<dbReference type="EMBL" id="Y14354">
    <property type="protein sequence ID" value="CAA74726.1"/>
    <property type="status" value="JOINED"/>
    <property type="molecule type" value="Genomic_DNA"/>
</dbReference>
<dbReference type="PIR" id="S26180">
    <property type="entry name" value="S26180"/>
</dbReference>
<dbReference type="RefSeq" id="NP_001004493.1">
    <molecule id="O42414-2"/>
    <property type="nucleotide sequence ID" value="NM_001004493.5"/>
</dbReference>
<dbReference type="SMR" id="O42414"/>
<dbReference type="BioGRID" id="680872">
    <property type="interactions" value="3"/>
</dbReference>
<dbReference type="FunCoup" id="O42414">
    <property type="interactions" value="409"/>
</dbReference>
<dbReference type="IntAct" id="O42414">
    <property type="interactions" value="1"/>
</dbReference>
<dbReference type="STRING" id="9031.ENSGALP00000068078"/>
<dbReference type="GlyCosmos" id="O42414">
    <property type="glycosylation" value="16 sites, No reported glycans"/>
</dbReference>
<dbReference type="GlyGen" id="O42414">
    <property type="glycosylation" value="17 sites"/>
</dbReference>
<dbReference type="PaxDb" id="9031-ENSGALP00000034591"/>
<dbReference type="GeneID" id="419824"/>
<dbReference type="KEGG" id="gga:419824"/>
<dbReference type="CTD" id="23114"/>
<dbReference type="VEuPathDB" id="HostDB:geneid_419824"/>
<dbReference type="eggNOG" id="KOG3513">
    <property type="taxonomic scope" value="Eukaryota"/>
</dbReference>
<dbReference type="InParanoid" id="O42414"/>
<dbReference type="OrthoDB" id="10010359at2759"/>
<dbReference type="PhylomeDB" id="O42414"/>
<dbReference type="PRO" id="PR:O42414"/>
<dbReference type="Proteomes" id="UP000000539">
    <property type="component" value="Unassembled WGS sequence"/>
</dbReference>
<dbReference type="GO" id="GO:0030424">
    <property type="term" value="C:axon"/>
    <property type="evidence" value="ECO:0000318"/>
    <property type="project" value="GO_Central"/>
</dbReference>
<dbReference type="GO" id="GO:0005886">
    <property type="term" value="C:plasma membrane"/>
    <property type="evidence" value="ECO:0000250"/>
    <property type="project" value="UniProtKB"/>
</dbReference>
<dbReference type="GO" id="GO:0098632">
    <property type="term" value="F:cell-cell adhesion mediator activity"/>
    <property type="evidence" value="ECO:0000318"/>
    <property type="project" value="GO_Central"/>
</dbReference>
<dbReference type="GO" id="GO:0007411">
    <property type="term" value="P:axon guidance"/>
    <property type="evidence" value="ECO:0000318"/>
    <property type="project" value="GO_Central"/>
</dbReference>
<dbReference type="GO" id="GO:0070593">
    <property type="term" value="P:dendrite self-avoidance"/>
    <property type="evidence" value="ECO:0000318"/>
    <property type="project" value="GO_Central"/>
</dbReference>
<dbReference type="GO" id="GO:0007156">
    <property type="term" value="P:homophilic cell adhesion via plasma membrane adhesion molecules"/>
    <property type="evidence" value="ECO:0000318"/>
    <property type="project" value="GO_Central"/>
</dbReference>
<dbReference type="CDD" id="cd00063">
    <property type="entry name" value="FN3"/>
    <property type="match status" value="5"/>
</dbReference>
<dbReference type="CDD" id="cd05731">
    <property type="entry name" value="Ig3_L1-CAM_like"/>
    <property type="match status" value="1"/>
</dbReference>
<dbReference type="CDD" id="cd05875">
    <property type="entry name" value="IgI_hNeurofascin_like"/>
    <property type="match status" value="1"/>
</dbReference>
<dbReference type="FunFam" id="2.60.40.10:FF:000057">
    <property type="entry name" value="neural cell adhesion molecule L1"/>
    <property type="match status" value="1"/>
</dbReference>
<dbReference type="FunFam" id="2.60.40.10:FF:000363">
    <property type="entry name" value="neurofascin isoform X1"/>
    <property type="match status" value="1"/>
</dbReference>
<dbReference type="FunFam" id="2.60.40.10:FF:000512">
    <property type="entry name" value="neurofascin isoform X1"/>
    <property type="match status" value="1"/>
</dbReference>
<dbReference type="FunFam" id="2.60.40.10:FF:000574">
    <property type="entry name" value="neurofascin isoform X1"/>
    <property type="match status" value="1"/>
</dbReference>
<dbReference type="FunFam" id="2.60.40.10:FF:000525">
    <property type="entry name" value="neurofascin isoform X2"/>
    <property type="match status" value="1"/>
</dbReference>
<dbReference type="FunFam" id="2.60.40.10:FF:000005">
    <property type="entry name" value="Neuronal cell adhesion molecule"/>
    <property type="match status" value="1"/>
</dbReference>
<dbReference type="FunFam" id="2.60.40.10:FF:000038">
    <property type="entry name" value="Neuronal cell adhesion molecule"/>
    <property type="match status" value="1"/>
</dbReference>
<dbReference type="FunFam" id="2.60.40.10:FF:000078">
    <property type="entry name" value="Neuronal cell adhesion molecule"/>
    <property type="match status" value="1"/>
</dbReference>
<dbReference type="FunFam" id="2.60.40.10:FF:000114">
    <property type="entry name" value="Neuronal cell adhesion molecule"/>
    <property type="match status" value="1"/>
</dbReference>
<dbReference type="FunFam" id="2.60.40.10:FF:000347">
    <property type="entry name" value="Neuronal cell adhesion molecule"/>
    <property type="match status" value="1"/>
</dbReference>
<dbReference type="FunFam" id="2.60.40.10:FF:000448">
    <property type="entry name" value="Neuronal cell adhesion molecule"/>
    <property type="match status" value="1"/>
</dbReference>
<dbReference type="Gene3D" id="2.60.40.10">
    <property type="entry name" value="Immunoglobulins"/>
    <property type="match status" value="11"/>
</dbReference>
<dbReference type="InterPro" id="IPR003961">
    <property type="entry name" value="FN3_dom"/>
</dbReference>
<dbReference type="InterPro" id="IPR036116">
    <property type="entry name" value="FN3_sf"/>
</dbReference>
<dbReference type="InterPro" id="IPR007110">
    <property type="entry name" value="Ig-like_dom"/>
</dbReference>
<dbReference type="InterPro" id="IPR036179">
    <property type="entry name" value="Ig-like_dom_sf"/>
</dbReference>
<dbReference type="InterPro" id="IPR013783">
    <property type="entry name" value="Ig-like_fold"/>
</dbReference>
<dbReference type="InterPro" id="IPR013098">
    <property type="entry name" value="Ig_I-set"/>
</dbReference>
<dbReference type="InterPro" id="IPR003599">
    <property type="entry name" value="Ig_sub"/>
</dbReference>
<dbReference type="InterPro" id="IPR003598">
    <property type="entry name" value="Ig_sub2"/>
</dbReference>
<dbReference type="InterPro" id="IPR026966">
    <property type="entry name" value="Neurofascin/L1/NrCAM_C"/>
</dbReference>
<dbReference type="InterPro" id="IPR026965">
    <property type="entry name" value="NFASC_Ig-like"/>
</dbReference>
<dbReference type="PANTHER" id="PTHR44170:SF12">
    <property type="entry name" value="NEUROFASCIN"/>
    <property type="match status" value="1"/>
</dbReference>
<dbReference type="PANTHER" id="PTHR44170">
    <property type="entry name" value="PROTEIN SIDEKICK"/>
    <property type="match status" value="1"/>
</dbReference>
<dbReference type="Pfam" id="PF13882">
    <property type="entry name" value="Bravo_FIGEY"/>
    <property type="match status" value="1"/>
</dbReference>
<dbReference type="Pfam" id="PF00041">
    <property type="entry name" value="fn3"/>
    <property type="match status" value="3"/>
</dbReference>
<dbReference type="Pfam" id="PF07679">
    <property type="entry name" value="I-set"/>
    <property type="match status" value="3"/>
</dbReference>
<dbReference type="Pfam" id="PF13927">
    <property type="entry name" value="Ig_3"/>
    <property type="match status" value="2"/>
</dbReference>
<dbReference type="SMART" id="SM00060">
    <property type="entry name" value="FN3"/>
    <property type="match status" value="5"/>
</dbReference>
<dbReference type="SMART" id="SM00409">
    <property type="entry name" value="IG"/>
    <property type="match status" value="6"/>
</dbReference>
<dbReference type="SMART" id="SM00408">
    <property type="entry name" value="IGc2"/>
    <property type="match status" value="6"/>
</dbReference>
<dbReference type="SUPFAM" id="SSF49265">
    <property type="entry name" value="Fibronectin type III"/>
    <property type="match status" value="3"/>
</dbReference>
<dbReference type="SUPFAM" id="SSF48726">
    <property type="entry name" value="Immunoglobulin"/>
    <property type="match status" value="6"/>
</dbReference>
<dbReference type="PROSITE" id="PS50853">
    <property type="entry name" value="FN3"/>
    <property type="match status" value="5"/>
</dbReference>
<dbReference type="PROSITE" id="PS50835">
    <property type="entry name" value="IG_LIKE"/>
    <property type="match status" value="6"/>
</dbReference>
<comment type="function">
    <text evidence="1">Cell adhesion, ankyrin-binding protein which may be involved in neurite extension, axonal guidance, synaptogenesis, myelination and neuron-glial cell interactions.</text>
</comment>
<comment type="subcellular location">
    <subcellularLocation>
        <location>Cell membrane</location>
        <topology>Single-pass type I membrane protein</topology>
    </subcellularLocation>
</comment>
<comment type="alternative products">
    <event type="alternative splicing"/>
    <isoform>
        <id>O42414-1</id>
        <name>1</name>
        <sequence type="displayed"/>
    </isoform>
    <isoform>
        <id>O42414-2</id>
        <name>2</name>
        <sequence type="described" ref="VSP_008935 VSP_008936"/>
    </isoform>
    <text>A number of isoforms are produced.</text>
</comment>
<comment type="developmental stage">
    <text>There is one major 'early' isoform and multiple 'late' isoforms. Around 50 isoforms are found at different developmental stages.</text>
</comment>
<comment type="PTM">
    <text evidence="6">N-glycosylated and O-glycosylated.</text>
</comment>
<comment type="PTM">
    <text evidence="6">May be proteolytically cleaved at Arg-636.</text>
</comment>
<comment type="similarity">
    <text evidence="8">Belongs to the immunoglobulin superfamily. L1/neurofascin/NgCAM family.</text>
</comment>
<name>NFASC_CHICK</name>
<gene>
    <name type="primary">NFASC</name>
</gene>
<protein>
    <recommendedName>
        <fullName>Neurofascin</fullName>
    </recommendedName>
</protein>
<reference key="1">
    <citation type="journal article" date="1992" name="J. Cell Biol.">
        <title>Structure of the axonal surface recognition molecule neurofascin and its relationship to a neural subgroup of the immunoglobulin superfamily.</title>
        <authorList>
            <person name="Volkmer H."/>
            <person name="Hassel B."/>
            <person name="Wolff J.M."/>
            <person name="Frank R."/>
            <person name="Rathjen F.G."/>
        </authorList>
    </citation>
    <scope>NUCLEOTIDE SEQUENCE [MRNA] (ISOFORM 2)</scope>
    <scope>PROTEIN SEQUENCE OF 26-46; 637-641; 717-730; 758-781 AND 801-815</scope>
    <scope>PROTEOLYTIC CLEAVAGE AT ARG-636</scope>
    <scope>GLYCOSYLATION</scope>
    <source>
        <tissue>Brain</tissue>
    </source>
</reference>
<reference key="2">
    <citation type="journal article" date="1997" name="J. Biol. Chem.">
        <title>Organization of the neurofascin gene and analysis of developmentally regulated alternative splicing.</title>
        <authorList>
            <person name="Hassel B."/>
            <person name="Rathjen F.G."/>
            <person name="Volkmer H."/>
        </authorList>
    </citation>
    <scope>NUCLEOTIDE SEQUENCE [GENOMIC DNA] (ISOFORM 1)</scope>
    <source>
        <tissue>Liver</tissue>
    </source>
</reference>
<feature type="signal peptide" evidence="6">
    <location>
        <begin position="1"/>
        <end position="25"/>
    </location>
</feature>
<feature type="chain" id="PRO_0000015048" description="Neurofascin">
    <location>
        <begin position="26"/>
        <end position="1369"/>
    </location>
</feature>
<feature type="topological domain" description="Extracellular" evidence="2">
    <location>
        <begin position="26"/>
        <end position="1235"/>
    </location>
</feature>
<feature type="transmembrane region" description="Helical" evidence="2">
    <location>
        <begin position="1236"/>
        <end position="1256"/>
    </location>
</feature>
<feature type="topological domain" description="Cytoplasmic" evidence="2">
    <location>
        <begin position="1257"/>
        <end position="1369"/>
    </location>
</feature>
<feature type="domain" description="Ig-like C2-type 1">
    <location>
        <begin position="42"/>
        <end position="138"/>
    </location>
</feature>
<feature type="domain" description="Ig-like C2-type 2">
    <location>
        <begin position="144"/>
        <end position="231"/>
    </location>
</feature>
<feature type="domain" description="Ig-like C2-type 3">
    <location>
        <begin position="262"/>
        <end position="350"/>
    </location>
</feature>
<feature type="domain" description="Ig-like C2-type 4">
    <location>
        <begin position="355"/>
        <end position="442"/>
    </location>
</feature>
<feature type="domain" description="Ig-like C2-type 5">
    <location>
        <begin position="448"/>
        <end position="535"/>
    </location>
</feature>
<feature type="domain" description="Ig-like C2-type 6">
    <location>
        <begin position="539"/>
        <end position="626"/>
    </location>
</feature>
<feature type="domain" description="Fibronectin type-III 1" evidence="4">
    <location>
        <begin position="645"/>
        <end position="740"/>
    </location>
</feature>
<feature type="domain" description="Fibronectin type-III 2" evidence="4">
    <location>
        <begin position="745"/>
        <end position="838"/>
    </location>
</feature>
<feature type="domain" description="Fibronectin type-III 3" evidence="4">
    <location>
        <begin position="843"/>
        <end position="945"/>
    </location>
</feature>
<feature type="domain" description="Fibronectin type-III 4" evidence="4">
    <location>
        <begin position="949"/>
        <end position="1057"/>
    </location>
</feature>
<feature type="domain" description="Fibronectin type-III 5" evidence="4">
    <location>
        <begin position="1133"/>
        <end position="1222"/>
    </location>
</feature>
<feature type="region of interest" description="Disordered" evidence="5">
    <location>
        <begin position="730"/>
        <end position="753"/>
    </location>
</feature>
<feature type="region of interest" description="Disordered" evidence="5">
    <location>
        <begin position="1078"/>
        <end position="1097"/>
    </location>
</feature>
<feature type="region of interest" description="Disordered" evidence="5">
    <location>
        <begin position="1266"/>
        <end position="1369"/>
    </location>
</feature>
<feature type="compositionally biased region" description="Polar residues" evidence="5">
    <location>
        <begin position="730"/>
        <end position="739"/>
    </location>
</feature>
<feature type="compositionally biased region" description="Basic and acidic residues" evidence="5">
    <location>
        <begin position="1266"/>
        <end position="1282"/>
    </location>
</feature>
<feature type="compositionally biased region" description="Basic and acidic residues" evidence="5">
    <location>
        <begin position="1289"/>
        <end position="1298"/>
    </location>
</feature>
<feature type="compositionally biased region" description="Polar residues" evidence="5">
    <location>
        <begin position="1300"/>
        <end position="1313"/>
    </location>
</feature>
<feature type="site" description="Cleavage" evidence="9">
    <location>
        <begin position="636"/>
        <end position="637"/>
    </location>
</feature>
<feature type="glycosylation site" description="N-linked (GlcNAc...) asparagine" evidence="2">
    <location>
        <position position="241"/>
    </location>
</feature>
<feature type="glycosylation site" description="N-linked (GlcNAc...) asparagine" evidence="2">
    <location>
        <position position="247"/>
    </location>
</feature>
<feature type="glycosylation site" description="N-linked (GlcNAc...) asparagine" evidence="2">
    <location>
        <position position="323"/>
    </location>
</feature>
<feature type="glycosylation site" description="N-linked (GlcNAc...) asparagine" evidence="2">
    <location>
        <position position="427"/>
    </location>
</feature>
<feature type="glycosylation site" description="N-linked (GlcNAc...) asparagine" evidence="2">
    <location>
        <position position="464"/>
    </location>
</feature>
<feature type="glycosylation site" description="N-linked (GlcNAc...) asparagine" evidence="2">
    <location>
        <position position="501"/>
    </location>
</feature>
<feature type="glycosylation site" description="N-linked (GlcNAc...) asparagine" evidence="2">
    <location>
        <position position="692"/>
    </location>
</feature>
<feature type="glycosylation site" description="N-linked (GlcNAc...) asparagine" evidence="2">
    <location>
        <position position="767"/>
    </location>
</feature>
<feature type="glycosylation site" description="N-linked (GlcNAc...) asparagine" evidence="2">
    <location>
        <position position="793"/>
    </location>
</feature>
<feature type="glycosylation site" description="N-linked (GlcNAc...) asparagine" evidence="2">
    <location>
        <position position="853"/>
    </location>
</feature>
<feature type="glycosylation site" description="N-linked (GlcNAc...) asparagine" evidence="2">
    <location>
        <position position="994"/>
    </location>
</feature>
<feature type="glycosylation site" description="N-linked (GlcNAc...) asparagine" evidence="2">
    <location>
        <position position="1009"/>
    </location>
</feature>
<feature type="glycosylation site" description="N-linked (GlcNAc...) asparagine" evidence="2">
    <location>
        <position position="1133"/>
    </location>
</feature>
<feature type="glycosylation site" description="N-linked (GlcNAc...) asparagine" evidence="2">
    <location>
        <position position="1150"/>
    </location>
</feature>
<feature type="glycosylation site" description="N-linked (GlcNAc...) asparagine" evidence="2">
    <location>
        <position position="1156"/>
    </location>
</feature>
<feature type="glycosylation site" description="N-linked (GlcNAc...) asparagine" evidence="2">
    <location>
        <position position="1171"/>
    </location>
</feature>
<feature type="disulfide bond" evidence="3">
    <location>
        <begin position="64"/>
        <end position="119"/>
    </location>
</feature>
<feature type="disulfide bond" evidence="3">
    <location>
        <begin position="163"/>
        <end position="214"/>
    </location>
</feature>
<feature type="disulfide bond" evidence="3">
    <location>
        <begin position="286"/>
        <end position="334"/>
    </location>
</feature>
<feature type="disulfide bond" evidence="3">
    <location>
        <begin position="376"/>
        <end position="426"/>
    </location>
</feature>
<feature type="disulfide bond" evidence="3">
    <location>
        <begin position="470"/>
        <end position="519"/>
    </location>
</feature>
<feature type="disulfide bond" evidence="3">
    <location>
        <begin position="561"/>
        <end position="610"/>
    </location>
</feature>
<feature type="splice variant" id="VSP_008935" description="In isoform 2." evidence="7">
    <original>SCLSSPV</original>
    <variation>F</variation>
    <location>
        <begin position="987"/>
        <end position="993"/>
    </location>
</feature>
<feature type="splice variant" id="VSP_008936" description="In isoform 2." evidence="7">
    <location>
        <begin position="1132"/>
        <end position="1222"/>
    </location>
</feature>
<feature type="sequence conflict" description="In Ref. 2; CAA46330." evidence="8" ref="2">
    <original>T</original>
    <variation>A</variation>
    <location>
        <position position="1105"/>
    </location>
</feature>
<keyword id="KW-0025">Alternative splicing</keyword>
<keyword id="KW-0130">Cell adhesion</keyword>
<keyword id="KW-1003">Cell membrane</keyword>
<keyword id="KW-0903">Direct protein sequencing</keyword>
<keyword id="KW-1015">Disulfide bond</keyword>
<keyword id="KW-0325">Glycoprotein</keyword>
<keyword id="KW-0393">Immunoglobulin domain</keyword>
<keyword id="KW-0472">Membrane</keyword>
<keyword id="KW-1185">Reference proteome</keyword>
<keyword id="KW-0677">Repeat</keyword>
<keyword id="KW-0732">Signal</keyword>
<keyword id="KW-0812">Transmembrane</keyword>
<keyword id="KW-1133">Transmembrane helix</keyword>
<sequence length="1369" mass="152955">MVLHSHQLTYAGIAFALCLHHLISAIEVPLDSNIQSELPQPPTITKQSVKDYIVDPRDNIFIECEAKGNPVPTFSWTRNGKFFNVAKDPKVSMRRRSGTLVIDFHGGGRPDDYEGEYQCFARNDYGTALSSKIHLQVSRSPLWPKEKVDVIEVDEGAPLSLQCNPPPGLPPPVIFWMSSSMEPIHQDKRVSQGQNGDLYFSNVMLQDAQTDYSCNARFHFTHTIQQKNPYTLKVKTKKPHNETSLRNHTDMYSARGVTETTPSFMYPYGTSSSQMVLRGVDLLLECIASGVPAPDIMWYKKGGELPAGKTKLENFNKALRISNVSEEDSGEYFCLASNKMGSIRHTISVRVKAAPYWLDEPQNLILAPGEDGRLVCRANGNPKPSIQWLVNGEPIEGSPPNPSREVAGDTIVFRDTQIGSSAVYQCNASNEHGYLLANAFVSVLDVPPRILAPRNQLIKVIQYNRTRLDCPFFGSPIPTLRWFKNGQGNMLDGGNYKAHENGSLEMSMARKEDQGIYTCVATNILGKVEAQVRLEVKDPTRIVRGPEDQVVKRGSMPRLHCRVKHDPTLKLTVTWLKDDAPLYIGNRMKKEDDGLTIYGVAEKDQGDYTCVASTELDKDSAKAYLTVLAIPANRLRDLPKERPDRPRDLELSDLAERSVKLTWIPGDDNNSPITDYIVQFEEDRFQPGTWHNHSRYPGNVNSALLSLSPYVNYQFRVIAVNDVGSSLPSMPSERYQTSGARPEINPTGVQGAGTQKNNMEITWTPLNATQAYGPNLRYIVRWRRRDPRGSWYNETVKAPRHVVWNTPIYVPYEIKVQAENDFGRAPEPETYIGYSGEDYPKAAPTDVRIRVLNSTAIALTWTRVHLDTIQGQLKEYRAYFWRDSSLLKNLWVSKKRQYVSFPGDRNRGIVSRLFPYSNYKLEMVVTNGRGDGPRSEVKEFPTPEGVPSSPRYLRIRQPNLESINLEWDHPEHPNGVLTGYNLRYQASCLSSPVNGSKTGRTLVENFSPNQTRFTVQRTDPISRYRFFLRARTQVGDGEVIVEESPALLNEATPTPASTWLPPPTTELTPAATIATTTTTATPTTETPPTEIPTTAIPTTTTTTTTTAASTVASTTTTAERAAAATTKQELATNGSSIWDIRAWANSNWANITWSHNYSAGTDFVVKYITSNKTEKSIPVKAQTPSSVQLANLTPGMVYKLWVFPIWSSPSEHSYITFTTSSAYTKNHVDIATQGWFIGLMCAIALLVLILLIVCFIKRSRGGKYPVRDNKDEHLNPEDKNVEDGSFDYRSLESDEDNKPLPNSQTSLDGTIKQQESDDSLVDYGEGGEGQFNEDGSFIGQYTVKKDKEETEGNESSEATSPVNAIYSLA</sequence>
<organism>
    <name type="scientific">Gallus gallus</name>
    <name type="common">Chicken</name>
    <dbReference type="NCBI Taxonomy" id="9031"/>
    <lineage>
        <taxon>Eukaryota</taxon>
        <taxon>Metazoa</taxon>
        <taxon>Chordata</taxon>
        <taxon>Craniata</taxon>
        <taxon>Vertebrata</taxon>
        <taxon>Euteleostomi</taxon>
        <taxon>Archelosauria</taxon>
        <taxon>Archosauria</taxon>
        <taxon>Dinosauria</taxon>
        <taxon>Saurischia</taxon>
        <taxon>Theropoda</taxon>
        <taxon>Coelurosauria</taxon>
        <taxon>Aves</taxon>
        <taxon>Neognathae</taxon>
        <taxon>Galloanserae</taxon>
        <taxon>Galliformes</taxon>
        <taxon>Phasianidae</taxon>
        <taxon>Phasianinae</taxon>
        <taxon>Gallus</taxon>
    </lineage>
</organism>
<proteinExistence type="evidence at protein level"/>
<accession>O42414</accession>
<accession>Q90924</accession>
<evidence type="ECO:0000250" key="1"/>
<evidence type="ECO:0000255" key="2"/>
<evidence type="ECO:0000255" key="3">
    <source>
        <dbReference type="PROSITE-ProRule" id="PRU00114"/>
    </source>
</evidence>
<evidence type="ECO:0000255" key="4">
    <source>
        <dbReference type="PROSITE-ProRule" id="PRU00316"/>
    </source>
</evidence>
<evidence type="ECO:0000256" key="5">
    <source>
        <dbReference type="SAM" id="MobiDB-lite"/>
    </source>
</evidence>
<evidence type="ECO:0000269" key="6">
    <source>
    </source>
</evidence>
<evidence type="ECO:0000303" key="7">
    <source>
    </source>
</evidence>
<evidence type="ECO:0000305" key="8"/>
<evidence type="ECO:0000305" key="9">
    <source>
    </source>
</evidence>